<feature type="chain" id="PRO_1000012734" description="ATP-dependent protease ATPase subunit HslU">
    <location>
        <begin position="1"/>
        <end position="443"/>
    </location>
</feature>
<feature type="binding site" evidence="1">
    <location>
        <position position="18"/>
    </location>
    <ligand>
        <name>ATP</name>
        <dbReference type="ChEBI" id="CHEBI:30616"/>
    </ligand>
</feature>
<feature type="binding site" evidence="1">
    <location>
        <begin position="60"/>
        <end position="65"/>
    </location>
    <ligand>
        <name>ATP</name>
        <dbReference type="ChEBI" id="CHEBI:30616"/>
    </ligand>
</feature>
<feature type="binding site" evidence="1">
    <location>
        <position position="256"/>
    </location>
    <ligand>
        <name>ATP</name>
        <dbReference type="ChEBI" id="CHEBI:30616"/>
    </ligand>
</feature>
<feature type="binding site" evidence="1">
    <location>
        <position position="321"/>
    </location>
    <ligand>
        <name>ATP</name>
        <dbReference type="ChEBI" id="CHEBI:30616"/>
    </ligand>
</feature>
<feature type="binding site" evidence="1">
    <location>
        <position position="393"/>
    </location>
    <ligand>
        <name>ATP</name>
        <dbReference type="ChEBI" id="CHEBI:30616"/>
    </ligand>
</feature>
<name>HSLU_ECOK1</name>
<proteinExistence type="inferred from homology"/>
<sequence length="443" mass="49581">MSEMTPREIVSELDKHIIGQDNAKRSVAIALRNRWRRMQLNEELRHEVTPKNILMIGPTGVGKTEIARRLAKLANAPFIKVEATKFTEVGYVGKEVDSIIRDLTDAAVKMVRVQAIEKNRYRAEELAEERILDVLIPPAKNNWGQTEQQQEPSAARQAFRKKLREGQLDDKEIEIDLAAAPMGVEIMAPPGMEEMTSQLQSMFQNLGGQKQKARKLKIKDAMKLLIEEEAAKLVNPEELKQDAIDAVEQHGIVFIDEIDKICKRGESSGPDVSREGVQRDLLPLVEGCTVSTKHGMVKTDHILFIASGAFQIAKPSDLIPELQGRLPIRVELQALTTSDFERILTEPNASITVQYKALMATEGVNIEFTDSGIKRIAEAAWQVNESTENIGARRLHTVLERLMEEISYDASDLSGQTITIDADYVSKHLDALVADEDLSRFIL</sequence>
<protein>
    <recommendedName>
        <fullName evidence="1">ATP-dependent protease ATPase subunit HslU</fullName>
    </recommendedName>
    <alternativeName>
        <fullName evidence="1">Heat shock protein HslU</fullName>
    </alternativeName>
    <alternativeName>
        <fullName evidence="1">Unfoldase HslU</fullName>
    </alternativeName>
</protein>
<comment type="function">
    <text evidence="1">ATPase subunit of a proteasome-like degradation complex; this subunit has chaperone activity. The binding of ATP and its subsequent hydrolysis by HslU are essential for unfolding of protein substrates subsequently hydrolyzed by HslV. HslU recognizes the N-terminal part of its protein substrates and unfolds these before they are guided to HslV for hydrolysis.</text>
</comment>
<comment type="subunit">
    <text evidence="1">A double ring-shaped homohexamer of HslV is capped on each side by a ring-shaped HslU homohexamer. The assembly of the HslU/HslV complex is dependent on binding of ATP.</text>
</comment>
<comment type="subcellular location">
    <subcellularLocation>
        <location evidence="1">Cytoplasm</location>
    </subcellularLocation>
</comment>
<comment type="induction">
    <text evidence="1">By heat shock.</text>
</comment>
<comment type="similarity">
    <text evidence="1">Belongs to the ClpX chaperone family. HslU subfamily.</text>
</comment>
<evidence type="ECO:0000255" key="1">
    <source>
        <dbReference type="HAMAP-Rule" id="MF_00249"/>
    </source>
</evidence>
<keyword id="KW-0067">ATP-binding</keyword>
<keyword id="KW-0143">Chaperone</keyword>
<keyword id="KW-0963">Cytoplasm</keyword>
<keyword id="KW-0547">Nucleotide-binding</keyword>
<keyword id="KW-1185">Reference proteome</keyword>
<keyword id="KW-0346">Stress response</keyword>
<reference key="1">
    <citation type="journal article" date="2007" name="J. Bacteriol.">
        <title>The genome sequence of avian pathogenic Escherichia coli strain O1:K1:H7 shares strong similarities with human extraintestinal pathogenic E. coli genomes.</title>
        <authorList>
            <person name="Johnson T.J."/>
            <person name="Kariyawasam S."/>
            <person name="Wannemuehler Y."/>
            <person name="Mangiamele P."/>
            <person name="Johnson S.J."/>
            <person name="Doetkott C."/>
            <person name="Skyberg J.A."/>
            <person name="Lynne A.M."/>
            <person name="Johnson J.R."/>
            <person name="Nolan L.K."/>
        </authorList>
    </citation>
    <scope>NUCLEOTIDE SEQUENCE [LARGE SCALE GENOMIC DNA]</scope>
</reference>
<gene>
    <name evidence="1" type="primary">hslU</name>
    <name type="ordered locus">Ecok1_39020</name>
    <name type="ORF">APECO1_2539</name>
</gene>
<dbReference type="EMBL" id="CP000468">
    <property type="protein sequence ID" value="ABJ03396.1"/>
    <property type="molecule type" value="Genomic_DNA"/>
</dbReference>
<dbReference type="RefSeq" id="WP_001293344.1">
    <property type="nucleotide sequence ID" value="NZ_CADILS010000014.1"/>
</dbReference>
<dbReference type="SMR" id="A1AIA6"/>
<dbReference type="KEGG" id="ecv:APECO1_2539"/>
<dbReference type="HOGENOM" id="CLU_033123_0_0_6"/>
<dbReference type="Proteomes" id="UP000008216">
    <property type="component" value="Chromosome"/>
</dbReference>
<dbReference type="GO" id="GO:0009376">
    <property type="term" value="C:HslUV protease complex"/>
    <property type="evidence" value="ECO:0007669"/>
    <property type="project" value="UniProtKB-UniRule"/>
</dbReference>
<dbReference type="GO" id="GO:0005524">
    <property type="term" value="F:ATP binding"/>
    <property type="evidence" value="ECO:0007669"/>
    <property type="project" value="UniProtKB-UniRule"/>
</dbReference>
<dbReference type="GO" id="GO:0016887">
    <property type="term" value="F:ATP hydrolysis activity"/>
    <property type="evidence" value="ECO:0007669"/>
    <property type="project" value="InterPro"/>
</dbReference>
<dbReference type="GO" id="GO:0008233">
    <property type="term" value="F:peptidase activity"/>
    <property type="evidence" value="ECO:0007669"/>
    <property type="project" value="InterPro"/>
</dbReference>
<dbReference type="GO" id="GO:0036402">
    <property type="term" value="F:proteasome-activating activity"/>
    <property type="evidence" value="ECO:0007669"/>
    <property type="project" value="UniProtKB-UniRule"/>
</dbReference>
<dbReference type="GO" id="GO:0043335">
    <property type="term" value="P:protein unfolding"/>
    <property type="evidence" value="ECO:0007669"/>
    <property type="project" value="UniProtKB-UniRule"/>
</dbReference>
<dbReference type="GO" id="GO:0051603">
    <property type="term" value="P:proteolysis involved in protein catabolic process"/>
    <property type="evidence" value="ECO:0007669"/>
    <property type="project" value="TreeGrafter"/>
</dbReference>
<dbReference type="CDD" id="cd19498">
    <property type="entry name" value="RecA-like_HslU"/>
    <property type="match status" value="1"/>
</dbReference>
<dbReference type="FunFam" id="1.10.8.10:FF:000012">
    <property type="entry name" value="ATP-dependent protease ATPase subunit HslU"/>
    <property type="match status" value="1"/>
</dbReference>
<dbReference type="FunFam" id="1.10.8.10:FF:000028">
    <property type="entry name" value="ATP-dependent protease ATPase subunit HslU"/>
    <property type="match status" value="1"/>
</dbReference>
<dbReference type="FunFam" id="1.10.8.60:FF:000027">
    <property type="entry name" value="ATP-dependent protease ATPase subunit HslU"/>
    <property type="match status" value="1"/>
</dbReference>
<dbReference type="FunFam" id="3.40.50.300:FF:000213">
    <property type="entry name" value="ATP-dependent protease ATPase subunit HslU"/>
    <property type="match status" value="1"/>
</dbReference>
<dbReference type="FunFam" id="3.40.50.300:FF:000220">
    <property type="entry name" value="ATP-dependent protease ATPase subunit HslU"/>
    <property type="match status" value="1"/>
</dbReference>
<dbReference type="Gene3D" id="1.10.8.60">
    <property type="match status" value="1"/>
</dbReference>
<dbReference type="Gene3D" id="1.10.8.10">
    <property type="entry name" value="DNA helicase RuvA subunit, C-terminal domain"/>
    <property type="match status" value="2"/>
</dbReference>
<dbReference type="Gene3D" id="3.40.50.300">
    <property type="entry name" value="P-loop containing nucleotide triphosphate hydrolases"/>
    <property type="match status" value="1"/>
</dbReference>
<dbReference type="HAMAP" id="MF_00249">
    <property type="entry name" value="HslU"/>
    <property type="match status" value="1"/>
</dbReference>
<dbReference type="InterPro" id="IPR003593">
    <property type="entry name" value="AAA+_ATPase"/>
</dbReference>
<dbReference type="InterPro" id="IPR050052">
    <property type="entry name" value="ATP-dep_Clp_protease_ClpX"/>
</dbReference>
<dbReference type="InterPro" id="IPR003959">
    <property type="entry name" value="ATPase_AAA_core"/>
</dbReference>
<dbReference type="InterPro" id="IPR019489">
    <property type="entry name" value="Clp_ATPase_C"/>
</dbReference>
<dbReference type="InterPro" id="IPR004491">
    <property type="entry name" value="HslU"/>
</dbReference>
<dbReference type="InterPro" id="IPR027417">
    <property type="entry name" value="P-loop_NTPase"/>
</dbReference>
<dbReference type="NCBIfam" id="TIGR00390">
    <property type="entry name" value="hslU"/>
    <property type="match status" value="1"/>
</dbReference>
<dbReference type="NCBIfam" id="NF003544">
    <property type="entry name" value="PRK05201.1"/>
    <property type="match status" value="1"/>
</dbReference>
<dbReference type="PANTHER" id="PTHR48102">
    <property type="entry name" value="ATP-DEPENDENT CLP PROTEASE ATP-BINDING SUBUNIT CLPX-LIKE, MITOCHONDRIAL-RELATED"/>
    <property type="match status" value="1"/>
</dbReference>
<dbReference type="PANTHER" id="PTHR48102:SF3">
    <property type="entry name" value="ATP-DEPENDENT PROTEASE ATPASE SUBUNIT HSLU"/>
    <property type="match status" value="1"/>
</dbReference>
<dbReference type="Pfam" id="PF00004">
    <property type="entry name" value="AAA"/>
    <property type="match status" value="1"/>
</dbReference>
<dbReference type="Pfam" id="PF07724">
    <property type="entry name" value="AAA_2"/>
    <property type="match status" value="1"/>
</dbReference>
<dbReference type="SMART" id="SM00382">
    <property type="entry name" value="AAA"/>
    <property type="match status" value="1"/>
</dbReference>
<dbReference type="SMART" id="SM01086">
    <property type="entry name" value="ClpB_D2-small"/>
    <property type="match status" value="1"/>
</dbReference>
<dbReference type="SUPFAM" id="SSF52540">
    <property type="entry name" value="P-loop containing nucleoside triphosphate hydrolases"/>
    <property type="match status" value="1"/>
</dbReference>
<accession>A1AIA6</accession>
<organism>
    <name type="scientific">Escherichia coli O1:K1 / APEC</name>
    <dbReference type="NCBI Taxonomy" id="405955"/>
    <lineage>
        <taxon>Bacteria</taxon>
        <taxon>Pseudomonadati</taxon>
        <taxon>Pseudomonadota</taxon>
        <taxon>Gammaproteobacteria</taxon>
        <taxon>Enterobacterales</taxon>
        <taxon>Enterobacteriaceae</taxon>
        <taxon>Escherichia</taxon>
    </lineage>
</organism>